<sequence length="243" mass="27821">MSATDRYSHQLLYATVRQRLLDDIAQGVYQAGQQIPTENELCTQYNVSRITIRKAISDLVADGVLIRWQGKGTFVQSQKVENALLTVSGFTDFGVSQGKATKEKVIEQERVSAAPFCEKLNIPGNSEVFHLCRVMYLDKEPLFIDSSWIPLSRYPDFDEIYVEGSSTYQLFQERFDTRVVSDKKTIDIFAATRPQAKWLKCELGEPLFRISKIAFDQNDKPVHVSELFCRANRITLTIDNKRH</sequence>
<name>FRLR_ECOLI</name>
<gene>
    <name evidence="2" type="primary">frlR</name>
    <name type="synonym">yhfR</name>
    <name type="ordered locus">b3375</name>
    <name type="ordered locus">JW5698</name>
</gene>
<reference key="1">
    <citation type="journal article" date="1997" name="Science">
        <title>The complete genome sequence of Escherichia coli K-12.</title>
        <authorList>
            <person name="Blattner F.R."/>
            <person name="Plunkett G. III"/>
            <person name="Bloch C.A."/>
            <person name="Perna N.T."/>
            <person name="Burland V."/>
            <person name="Riley M."/>
            <person name="Collado-Vides J."/>
            <person name="Glasner J.D."/>
            <person name="Rode C.K."/>
            <person name="Mayhew G.F."/>
            <person name="Gregor J."/>
            <person name="Davis N.W."/>
            <person name="Kirkpatrick H.A."/>
            <person name="Goeden M.A."/>
            <person name="Rose D.J."/>
            <person name="Mau B."/>
            <person name="Shao Y."/>
        </authorList>
    </citation>
    <scope>NUCLEOTIDE SEQUENCE [LARGE SCALE GENOMIC DNA]</scope>
    <source>
        <strain>K12 / MG1655 / ATCC 47076</strain>
    </source>
</reference>
<reference key="2">
    <citation type="journal article" date="2006" name="Mol. Syst. Biol.">
        <title>Highly accurate genome sequences of Escherichia coli K-12 strains MG1655 and W3110.</title>
        <authorList>
            <person name="Hayashi K."/>
            <person name="Morooka N."/>
            <person name="Yamamoto Y."/>
            <person name="Fujita K."/>
            <person name="Isono K."/>
            <person name="Choi S."/>
            <person name="Ohtsubo E."/>
            <person name="Baba T."/>
            <person name="Wanner B.L."/>
            <person name="Mori H."/>
            <person name="Horiuchi T."/>
        </authorList>
    </citation>
    <scope>NUCLEOTIDE SEQUENCE [LARGE SCALE GENOMIC DNA]</scope>
    <source>
        <strain>K12 / W3110 / ATCC 27325 / DSM 5911</strain>
    </source>
</reference>
<reference key="3">
    <citation type="journal article" date="2002" name="J. Biol. Chem.">
        <title>Identification of a pathway for the utilization of the Amadori product fructoselysine in Escherichia coli.</title>
        <authorList>
            <person name="Wiame E."/>
            <person name="Delpierre G."/>
            <person name="Collard F."/>
            <person name="Van Schaftingen E."/>
        </authorList>
    </citation>
    <scope>FUNCTION</scope>
    <scope>PATHWAY</scope>
    <scope>INDUCTION</scope>
</reference>
<organism>
    <name type="scientific">Escherichia coli (strain K12)</name>
    <dbReference type="NCBI Taxonomy" id="83333"/>
    <lineage>
        <taxon>Bacteria</taxon>
        <taxon>Pseudomonadati</taxon>
        <taxon>Pseudomonadota</taxon>
        <taxon>Gammaproteobacteria</taxon>
        <taxon>Enterobacterales</taxon>
        <taxon>Enterobacteriaceae</taxon>
        <taxon>Escherichia</taxon>
    </lineage>
</organism>
<dbReference type="EMBL" id="U18997">
    <property type="protein sequence ID" value="AAA58172.1"/>
    <property type="status" value="ALT_INIT"/>
    <property type="molecule type" value="Genomic_DNA"/>
</dbReference>
<dbReference type="EMBL" id="U00096">
    <property type="protein sequence ID" value="AAC76400.2"/>
    <property type="molecule type" value="Genomic_DNA"/>
</dbReference>
<dbReference type="EMBL" id="AP009048">
    <property type="protein sequence ID" value="BAE77916.1"/>
    <property type="molecule type" value="Genomic_DNA"/>
</dbReference>
<dbReference type="PIR" id="B65132">
    <property type="entry name" value="B65132"/>
</dbReference>
<dbReference type="RefSeq" id="NP_417834.6">
    <property type="nucleotide sequence ID" value="NC_000913.3"/>
</dbReference>
<dbReference type="RefSeq" id="WP_001276847.1">
    <property type="nucleotide sequence ID" value="NZ_STEB01000004.1"/>
</dbReference>
<dbReference type="SMR" id="P45544"/>
<dbReference type="BioGRID" id="4259581">
    <property type="interactions" value="87"/>
</dbReference>
<dbReference type="BioGRID" id="852194">
    <property type="interactions" value="4"/>
</dbReference>
<dbReference type="DIP" id="DIP-12327N"/>
<dbReference type="FunCoup" id="P45544">
    <property type="interactions" value="35"/>
</dbReference>
<dbReference type="IntAct" id="P45544">
    <property type="interactions" value="6"/>
</dbReference>
<dbReference type="STRING" id="511145.b3375"/>
<dbReference type="PaxDb" id="511145-b3375"/>
<dbReference type="EnsemblBacteria" id="AAC76400">
    <property type="protein sequence ID" value="AAC76400"/>
    <property type="gene ID" value="b3375"/>
</dbReference>
<dbReference type="GeneID" id="93778623"/>
<dbReference type="GeneID" id="947885"/>
<dbReference type="KEGG" id="ecj:JW5698"/>
<dbReference type="KEGG" id="eco:b3375"/>
<dbReference type="KEGG" id="ecoc:C3026_18320"/>
<dbReference type="PATRIC" id="fig|1411691.4.peg.3355"/>
<dbReference type="EchoBASE" id="EB2749"/>
<dbReference type="eggNOG" id="COG2188">
    <property type="taxonomic scope" value="Bacteria"/>
</dbReference>
<dbReference type="HOGENOM" id="CLU_063236_3_0_6"/>
<dbReference type="InParanoid" id="P45544"/>
<dbReference type="OMA" id="SRYSFEF"/>
<dbReference type="OrthoDB" id="6626198at2"/>
<dbReference type="PhylomeDB" id="P45544"/>
<dbReference type="BioCyc" id="EcoCyc:G7727-MONOMER"/>
<dbReference type="UniPathway" id="UPA00784"/>
<dbReference type="PRO" id="PR:P45544"/>
<dbReference type="Proteomes" id="UP000000625">
    <property type="component" value="Chromosome"/>
</dbReference>
<dbReference type="GO" id="GO:0003677">
    <property type="term" value="F:DNA binding"/>
    <property type="evidence" value="ECO:0007669"/>
    <property type="project" value="UniProtKB-KW"/>
</dbReference>
<dbReference type="GO" id="GO:0003700">
    <property type="term" value="F:DNA-binding transcription factor activity"/>
    <property type="evidence" value="ECO:0007669"/>
    <property type="project" value="InterPro"/>
</dbReference>
<dbReference type="GO" id="GO:0045892">
    <property type="term" value="P:negative regulation of DNA-templated transcription"/>
    <property type="evidence" value="ECO:0000318"/>
    <property type="project" value="GO_Central"/>
</dbReference>
<dbReference type="CDD" id="cd07377">
    <property type="entry name" value="WHTH_GntR"/>
    <property type="match status" value="1"/>
</dbReference>
<dbReference type="FunFam" id="1.10.10.10:FF:000079">
    <property type="entry name" value="GntR family transcriptional regulator"/>
    <property type="match status" value="1"/>
</dbReference>
<dbReference type="Gene3D" id="3.40.1410.10">
    <property type="entry name" value="Chorismate lyase-like"/>
    <property type="match status" value="1"/>
</dbReference>
<dbReference type="Gene3D" id="1.10.10.10">
    <property type="entry name" value="Winged helix-like DNA-binding domain superfamily/Winged helix DNA-binding domain"/>
    <property type="match status" value="1"/>
</dbReference>
<dbReference type="InterPro" id="IPR050679">
    <property type="entry name" value="Bact_HTH_transcr_reg"/>
</dbReference>
<dbReference type="InterPro" id="IPR028978">
    <property type="entry name" value="Chorismate_lyase_/UTRA_dom_sf"/>
</dbReference>
<dbReference type="InterPro" id="IPR000524">
    <property type="entry name" value="Tscrpt_reg_HTH_GntR"/>
</dbReference>
<dbReference type="InterPro" id="IPR011663">
    <property type="entry name" value="UTRA"/>
</dbReference>
<dbReference type="InterPro" id="IPR036388">
    <property type="entry name" value="WH-like_DNA-bd_sf"/>
</dbReference>
<dbReference type="InterPro" id="IPR036390">
    <property type="entry name" value="WH_DNA-bd_sf"/>
</dbReference>
<dbReference type="NCBIfam" id="NF008491">
    <property type="entry name" value="PRK11402.1"/>
    <property type="match status" value="1"/>
</dbReference>
<dbReference type="PANTHER" id="PTHR44846">
    <property type="entry name" value="MANNOSYL-D-GLYCERATE TRANSPORT/METABOLISM SYSTEM REPRESSOR MNGR-RELATED"/>
    <property type="match status" value="1"/>
</dbReference>
<dbReference type="PANTHER" id="PTHR44846:SF1">
    <property type="entry name" value="MANNOSYL-D-GLYCERATE TRANSPORT_METABOLISM SYSTEM REPRESSOR MNGR-RELATED"/>
    <property type="match status" value="1"/>
</dbReference>
<dbReference type="Pfam" id="PF00392">
    <property type="entry name" value="GntR"/>
    <property type="match status" value="1"/>
</dbReference>
<dbReference type="Pfam" id="PF07702">
    <property type="entry name" value="UTRA"/>
    <property type="match status" value="1"/>
</dbReference>
<dbReference type="PRINTS" id="PR00035">
    <property type="entry name" value="HTHGNTR"/>
</dbReference>
<dbReference type="SMART" id="SM00345">
    <property type="entry name" value="HTH_GNTR"/>
    <property type="match status" value="1"/>
</dbReference>
<dbReference type="SMART" id="SM00866">
    <property type="entry name" value="UTRA"/>
    <property type="match status" value="1"/>
</dbReference>
<dbReference type="SUPFAM" id="SSF64288">
    <property type="entry name" value="Chorismate lyase-like"/>
    <property type="match status" value="1"/>
</dbReference>
<dbReference type="SUPFAM" id="SSF46785">
    <property type="entry name" value="Winged helix' DNA-binding domain"/>
    <property type="match status" value="1"/>
</dbReference>
<dbReference type="PROSITE" id="PS50949">
    <property type="entry name" value="HTH_GNTR"/>
    <property type="match status" value="1"/>
</dbReference>
<comment type="function">
    <text evidence="4">May regulate the transcription of the frlABCDR operon, involved in the utilization of fructoselysine and psicoselysine.</text>
</comment>
<comment type="pathway">
    <text evidence="4">Carbohydrate metabolism; fructoselysine degradation [regulation].</text>
</comment>
<comment type="interaction">
    <interactant intactId="EBI-562481">
        <id>P45544</id>
    </interactant>
    <interactant intactId="EBI-552080">
        <id>P14294</id>
        <label>topB</label>
    </interactant>
    <organismsDiffer>false</organismsDiffer>
    <experiments>2</experiments>
</comment>
<comment type="induction">
    <text evidence="4">Induced by fructoselysine. Makes part of the frl operon with FrlA, FrlB, FrlC and FrlD.</text>
</comment>
<comment type="sequence caution" evidence="3">
    <conflict type="erroneous initiation">
        <sequence resource="EMBL-CDS" id="AAA58172"/>
    </conflict>
    <text>Extended N-terminus.</text>
</comment>
<keyword id="KW-0238">DNA-binding</keyword>
<keyword id="KW-1185">Reference proteome</keyword>
<keyword id="KW-0678">Repressor</keyword>
<keyword id="KW-0804">Transcription</keyword>
<keyword id="KW-0805">Transcription regulation</keyword>
<protein>
    <recommendedName>
        <fullName evidence="2">Probable fructoselysine utilization operon transcriptional repressor</fullName>
    </recommendedName>
    <alternativeName>
        <fullName evidence="3">HTH-type transcriptional regulator FrlR</fullName>
    </alternativeName>
</protein>
<proteinExistence type="evidence at protein level"/>
<evidence type="ECO:0000255" key="1">
    <source>
        <dbReference type="PROSITE-ProRule" id="PRU00307"/>
    </source>
</evidence>
<evidence type="ECO:0000303" key="2">
    <source>
    </source>
</evidence>
<evidence type="ECO:0000305" key="3"/>
<evidence type="ECO:0000305" key="4">
    <source>
    </source>
</evidence>
<feature type="chain" id="PRO_0000050642" description="Probable fructoselysine utilization operon transcriptional repressor">
    <location>
        <begin position="1"/>
        <end position="243"/>
    </location>
</feature>
<feature type="domain" description="HTH gntR-type" evidence="1">
    <location>
        <begin position="10"/>
        <end position="78"/>
    </location>
</feature>
<feature type="DNA-binding region" description="H-T-H motif" evidence="1">
    <location>
        <begin position="38"/>
        <end position="57"/>
    </location>
</feature>
<accession>P45544</accession>
<accession>Q2M740</accession>